<sequence>MGLWALLPGWVSATLLLALAALPAALAANSSGRWWGIVNVASSTNLLTDSKSLQLVLEPSLQLLSRKQRRLIRQNPGILHSVSGGLQSAVRECKWQFRNRRWNCPTAPGPHLFGKIVNRGCRETAFIFAITSAGVTHSVARSCSEGSIESCTCDYRRRGPGGPDWHWGGCSDNIDFGRLFGREFVDSGEKGRDLRFLMNLHNNEAGRTTVFSEMRQECKCHGMSGSCTVRTCWMRLPTLRAVGDVLRDRFDGASRVLYGNRGSNRASRAELLRLEPEDPAHKPPSPHDLVYFEKSPNFCTYSGRLGTAGTAGRACNSSSPALDGCELLCCGRGHRTRTQRVTERCNCTFHWCCHVSCRNCTHTRVLHECL</sequence>
<gene>
    <name type="primary">WNT1</name>
    <name type="synonym">INT1</name>
</gene>
<reference key="1">
    <citation type="journal article" date="1985" name="EMBO J.">
        <title>The nucleotide sequence of the human int-1 mammary oncogene; evolutionary conservation of coding and non-coding sequences.</title>
        <authorList>
            <person name="van Ooyen A."/>
            <person name="Kwee V."/>
            <person name="Nusse R."/>
        </authorList>
    </citation>
    <scope>NUCLEOTIDE SEQUENCE [GENOMIC DNA]</scope>
</reference>
<reference key="2">
    <citation type="submission" date="2004-10" db="EMBL/GenBank/DDBJ databases">
        <title>Cloning of human full-length CDSs in BD Creator(TM) system donor vector.</title>
        <authorList>
            <person name="Kalnine N."/>
            <person name="Chen X."/>
            <person name="Rolfs A."/>
            <person name="Halleck A."/>
            <person name="Hines L."/>
            <person name="Eisenstein S."/>
            <person name="Koundinya M."/>
            <person name="Raphael J."/>
            <person name="Moreira D."/>
            <person name="Kelley T."/>
            <person name="LaBaer J."/>
            <person name="Lin Y."/>
            <person name="Phelan M."/>
            <person name="Farmer A."/>
        </authorList>
    </citation>
    <scope>NUCLEOTIDE SEQUENCE [LARGE SCALE MRNA]</scope>
</reference>
<reference key="3">
    <citation type="submission" date="2005-07" db="EMBL/GenBank/DDBJ databases">
        <authorList>
            <person name="Mural R.J."/>
            <person name="Istrail S."/>
            <person name="Sutton G.G."/>
            <person name="Florea L."/>
            <person name="Halpern A.L."/>
            <person name="Mobarry C.M."/>
            <person name="Lippert R."/>
            <person name="Walenz B."/>
            <person name="Shatkay H."/>
            <person name="Dew I."/>
            <person name="Miller J.R."/>
            <person name="Flanigan M.J."/>
            <person name="Edwards N.J."/>
            <person name="Bolanos R."/>
            <person name="Fasulo D."/>
            <person name="Halldorsson B.V."/>
            <person name="Hannenhalli S."/>
            <person name="Turner R."/>
            <person name="Yooseph S."/>
            <person name="Lu F."/>
            <person name="Nusskern D.R."/>
            <person name="Shue B.C."/>
            <person name="Zheng X.H."/>
            <person name="Zhong F."/>
            <person name="Delcher A.L."/>
            <person name="Huson D.H."/>
            <person name="Kravitz S.A."/>
            <person name="Mouchard L."/>
            <person name="Reinert K."/>
            <person name="Remington K.A."/>
            <person name="Clark A.G."/>
            <person name="Waterman M.S."/>
            <person name="Eichler E.E."/>
            <person name="Adams M.D."/>
            <person name="Hunkapiller M.W."/>
            <person name="Myers E.W."/>
            <person name="Venter J.C."/>
        </authorList>
    </citation>
    <scope>NUCLEOTIDE SEQUENCE [LARGE SCALE GENOMIC DNA]</scope>
</reference>
<reference key="4">
    <citation type="journal article" date="2004" name="Genome Res.">
        <title>The status, quality, and expansion of the NIH full-length cDNA project: the Mammalian Gene Collection (MGC).</title>
        <authorList>
            <consortium name="The MGC Project Team"/>
        </authorList>
    </citation>
    <scope>NUCLEOTIDE SEQUENCE [LARGE SCALE MRNA]</scope>
    <source>
        <tissue>Testis</tissue>
    </source>
</reference>
<reference key="5">
    <citation type="journal article" date="2011" name="Cell. Signal.">
        <title>Fatty acid modification of Wnt1 and Wnt3a at serine is prerequisite for lipidation at cysteine and is essential for Wnt signalling.</title>
        <authorList>
            <person name="Doubravska L."/>
            <person name="Krausova M."/>
            <person name="Gradl D."/>
            <person name="Vojtechova M."/>
            <person name="Tumova L."/>
            <person name="Lukas J."/>
            <person name="Valenta T."/>
            <person name="Pospichalova V."/>
            <person name="Fafilek B."/>
            <person name="Plachy J."/>
            <person name="Sebesta O."/>
            <person name="Korinek V."/>
        </authorList>
    </citation>
    <scope>PRELIMINARY CYSTEINE PALMITOYLATION</scope>
    <scope>PALMITOLEOYLATION</scope>
</reference>
<reference key="6">
    <citation type="journal article" date="2013" name="Am. J. Hum. Genet.">
        <title>Mutations in WNT1 cause different forms of bone fragility.</title>
        <authorList>
            <person name="Keupp K."/>
            <person name="Beleggia F."/>
            <person name="Kayserili H."/>
            <person name="Barnes A.M."/>
            <person name="Steiner M."/>
            <person name="Semler O."/>
            <person name="Fischer B."/>
            <person name="Yigit G."/>
            <person name="Janda C.Y."/>
            <person name="Becker J."/>
            <person name="Breer S."/>
            <person name="Altunoglu U."/>
            <person name="Gruenhagen J."/>
            <person name="Krawitz P."/>
            <person name="Hecht J."/>
            <person name="Schinke T."/>
            <person name="Makareeva E."/>
            <person name="Lausch E."/>
            <person name="Cankaya T."/>
            <person name="Caparros-Martin J.A."/>
            <person name="Lapunzina P."/>
            <person name="Temtamy S."/>
            <person name="Aglan M."/>
            <person name="Zabel B."/>
            <person name="Eysel P."/>
            <person name="Koerber F."/>
            <person name="Leikin S."/>
            <person name="Garcia K.C."/>
            <person name="Netzer C."/>
            <person name="Schoenau E."/>
            <person name="Ruiz-Perez V.L."/>
            <person name="Mundlos S."/>
            <person name="Amling M."/>
            <person name="Kornak U."/>
            <person name="Marini J."/>
            <person name="Wollnik B."/>
        </authorList>
    </citation>
    <scope>FUNCTION</scope>
    <scope>INVOLVEMENT IN BMND16</scope>
    <scope>VARIANTS OI15 CYS-177 AND CYS-298</scope>
    <scope>VARIANT OSTEOP TRP-235</scope>
    <scope>CHARACTERIZATION OF VARIANT OI15 CYS-177</scope>
    <scope>CHARACTERIZATION OF VARIANT OSTEOP TRP-235</scope>
</reference>
<reference key="7">
    <citation type="journal article" date="2016" name="Elife">
        <title>Active and water-soluble form of lipidated Wnt protein is maintained by a serum glycoprotein afamin/alpha-albumin.</title>
        <authorList>
            <person name="Mihara E."/>
            <person name="Hirai H."/>
            <person name="Yamamoto H."/>
            <person name="Tamura-Kawakami K."/>
            <person name="Matano M."/>
            <person name="Kikuchi A."/>
            <person name="Sato T."/>
            <person name="Takagi J."/>
        </authorList>
    </citation>
    <scope>FUNCTION</scope>
    <scope>INTERACTION WITH AFM</scope>
    <scope>SUBCELLULAR LOCATION</scope>
</reference>
<reference key="8">
    <citation type="journal article" date="2017" name="Eur. J. Med. Genet.">
        <title>Novel missense loss-of-function mutations of WNT1 in an autosomal recessive Osteogenesis imperfecta patient.</title>
        <authorList>
            <person name="Won J.Y."/>
            <person name="Jang W.Y."/>
            <person name="Lee H.R."/>
            <person name="Park S.Y."/>
            <person name="Kim W.Y."/>
            <person name="Park J.H."/>
            <person name="Kim Y."/>
            <person name="Cho T.J."/>
        </authorList>
    </citation>
    <scope>FUNCTION</scope>
    <scope>INVOLVEMENT IN OI15</scope>
    <scope>VARIANTS OI15 ASP-123 AND GLY-153</scope>
    <scope>CHARACTERIZATION OF OI15 ASP-123 AND GLY-153</scope>
</reference>
<reference key="9">
    <citation type="journal article" date="2013" name="N. Engl. J. Med.">
        <title>WNT1 mutations in early-onset osteoporosis and osteogenesis imperfecta.</title>
        <authorList>
            <person name="Laine C.M."/>
            <person name="Joeng K.S."/>
            <person name="Campeau P.M."/>
            <person name="Kiviranta R."/>
            <person name="Tarkkonen K."/>
            <person name="Grover M."/>
            <person name="Lu J.T."/>
            <person name="Pekkinen M."/>
            <person name="Wessman M."/>
            <person name="Heino T.J."/>
            <person name="Nieminen-Pihala V."/>
            <person name="Aronen M."/>
            <person name="Laine T."/>
            <person name="Kroeger H."/>
            <person name="Cole W.G."/>
            <person name="Lehesjoki A.E."/>
            <person name="Nevarez L."/>
            <person name="Krakow D."/>
            <person name="Curry C.J."/>
            <person name="Cohn D.H."/>
            <person name="Gibbs R.A."/>
            <person name="Lee B.H."/>
            <person name="Maekitie O."/>
        </authorList>
    </citation>
    <scope>INVOLVEMENT IN OI15</scope>
    <scope>VARIANT OSTEOP GLY-218</scope>
    <scope>FUNCTION</scope>
    <scope>CHARACTERIZATION OF VARIANT OSTEOP GLY-218</scope>
</reference>
<reference key="10">
    <citation type="journal article" date="2013" name="Am. J. Hum. Genet.">
        <title>WNT1 mutations in families affected by moderately severe and progressive recessive osteogenesis imperfecta.</title>
        <authorList>
            <person name="Pyott S.M."/>
            <person name="Tran T.T."/>
            <person name="Leistritz D.F."/>
            <person name="Pepin M.G."/>
            <person name="Mendelsohn N.J."/>
            <person name="Temme R.T."/>
            <person name="Fernandez B.A."/>
            <person name="Elsayed S.M."/>
            <person name="Elsobky E."/>
            <person name="Verma I."/>
            <person name="Nair S."/>
            <person name="Turner E.H."/>
            <person name="Smith J.D."/>
            <person name="Jarvik G.P."/>
            <person name="Byers P.H."/>
        </authorList>
    </citation>
    <scope>VARIANT OI15 CYS-298</scope>
</reference>
<reference key="11">
    <citation type="journal article" date="2013" name="J. Med. Genet.">
        <title>Mutations in WNT1 are a cause of osteogenesis imperfecta.</title>
        <authorList>
            <person name="Fahiminiya S."/>
            <person name="Majewski J."/>
            <person name="Mort J."/>
            <person name="Moffatt P."/>
            <person name="Glorieux F.H."/>
            <person name="Rauch F."/>
        </authorList>
    </citation>
    <scope>VARIANTS OI15 PHE-143 AND PHE-355</scope>
</reference>
<organism>
    <name type="scientific">Homo sapiens</name>
    <name type="common">Human</name>
    <dbReference type="NCBI Taxonomy" id="9606"/>
    <lineage>
        <taxon>Eukaryota</taxon>
        <taxon>Metazoa</taxon>
        <taxon>Chordata</taxon>
        <taxon>Craniata</taxon>
        <taxon>Vertebrata</taxon>
        <taxon>Euteleostomi</taxon>
        <taxon>Mammalia</taxon>
        <taxon>Eutheria</taxon>
        <taxon>Euarchontoglires</taxon>
        <taxon>Primates</taxon>
        <taxon>Haplorrhini</taxon>
        <taxon>Catarrhini</taxon>
        <taxon>Hominidae</taxon>
        <taxon>Homo</taxon>
    </lineage>
</organism>
<feature type="signal peptide" evidence="5">
    <location>
        <begin position="1"/>
        <end position="27"/>
    </location>
</feature>
<feature type="chain" id="PRO_0000041405" description="Proto-oncogene Wnt-1">
    <location>
        <begin position="28"/>
        <end position="370"/>
    </location>
</feature>
<feature type="lipid moiety-binding region" description="O-palmitoleoyl serine; by PORCN" evidence="4">
    <location>
        <position position="224"/>
    </location>
</feature>
<feature type="glycosylation site" description="N-linked (GlcNAc...) asparagine" evidence="5">
    <location>
        <position position="29"/>
    </location>
</feature>
<feature type="glycosylation site" description="N-linked (GlcNAc...) asparagine" evidence="5">
    <location>
        <position position="316"/>
    </location>
</feature>
<feature type="glycosylation site" description="N-linked (GlcNAc...) asparagine" evidence="5">
    <location>
        <position position="346"/>
    </location>
</feature>
<feature type="glycosylation site" description="N-linked (GlcNAc...) asparagine" evidence="5">
    <location>
        <position position="359"/>
    </location>
</feature>
<feature type="disulfide bond" evidence="2">
    <location>
        <begin position="93"/>
        <end position="104"/>
    </location>
</feature>
<feature type="disulfide bond" evidence="2">
    <location>
        <begin position="143"/>
        <end position="151"/>
    </location>
</feature>
<feature type="disulfide bond" evidence="2">
    <location>
        <begin position="153"/>
        <end position="170"/>
    </location>
</feature>
<feature type="disulfide bond" evidence="2">
    <location>
        <begin position="218"/>
        <end position="232"/>
    </location>
</feature>
<feature type="disulfide bond" evidence="2">
    <location>
        <begin position="220"/>
        <end position="227"/>
    </location>
</feature>
<feature type="disulfide bond" evidence="2">
    <location>
        <begin position="299"/>
        <end position="330"/>
    </location>
</feature>
<feature type="disulfide bond" evidence="2">
    <location>
        <begin position="315"/>
        <end position="325"/>
    </location>
</feature>
<feature type="disulfide bond" evidence="2">
    <location>
        <begin position="329"/>
        <end position="369"/>
    </location>
</feature>
<feature type="disulfide bond" evidence="2">
    <location>
        <begin position="345"/>
        <end position="360"/>
    </location>
</feature>
<feature type="disulfide bond" evidence="2">
    <location>
        <begin position="347"/>
        <end position="357"/>
    </location>
</feature>
<feature type="disulfide bond" evidence="2">
    <location>
        <begin position="352"/>
        <end position="353"/>
    </location>
</feature>
<feature type="sequence variant" id="VAR_079407" description="In OI15; reduced capacity to activate canonical Wnt signaling." evidence="12">
    <original>E</original>
    <variation>D</variation>
    <location>
        <position position="123"/>
    </location>
</feature>
<feature type="sequence variant" id="VAR_069627" description="In OI15." evidence="7">
    <original>C</original>
    <variation>F</variation>
    <location>
        <position position="143"/>
    </location>
</feature>
<feature type="sequence variant" id="VAR_079408" description="In OI15; reduced capacity to activate canonical Wnt signaling." evidence="12">
    <original>C</original>
    <variation>G</variation>
    <location>
        <position position="153"/>
    </location>
</feature>
<feature type="sequence variant" id="VAR_069628" description="In OI15; completely fails to activate the Wnt-regulated beta-catenin signaling cascade." evidence="8">
    <original>G</original>
    <variation>C</variation>
    <location>
        <position position="177"/>
    </location>
</feature>
<feature type="sequence variant" id="VAR_069629" description="In OSTEOP; reduced capacity to activate canonical Wnt signaling; dbSNP:rs397514702." evidence="10">
    <original>C</original>
    <variation>G</variation>
    <location>
        <position position="218"/>
    </location>
</feature>
<feature type="sequence variant" id="VAR_069630" description="In OSTEOP; completely fails to activate the Wnt-regulated beta-catenin signaling cascade; dbSNP:rs387907359." evidence="8">
    <original>R</original>
    <variation>W</variation>
    <location>
        <position position="235"/>
    </location>
</feature>
<feature type="sequence variant" id="VAR_069631" description="In OI15; dbSNP:rs2137625459." evidence="8 9">
    <original>F</original>
    <variation>C</variation>
    <location>
        <position position="298"/>
    </location>
</feature>
<feature type="sequence variant" id="VAR_069632" description="In OI15; dbSNP:rs387907358." evidence="7">
    <original>V</original>
    <variation>F</variation>
    <location>
        <position position="355"/>
    </location>
</feature>
<comment type="function">
    <text evidence="1 8 10 11 12 13">Ligand for members of the frizzled family of seven transmembrane receptors (Probable). Acts in the canonical Wnt signaling pathway by promoting beta-catenin-dependent transcriptional activation (PubMed:23499309, PubMed:23656646, PubMed:26902720, PubMed:28528193). In some developmental processes, is also a ligand for the coreceptor RYK, thus triggering Wnt signaling (By similarity). Plays an essential role in the development of the embryonic brain and central nervous system (CNS) (By similarity). Has a role in osteoblast function, bone development and bone homeostasis (PubMed:23499309, PubMed:23656646).</text>
</comment>
<comment type="subunit">
    <text evidence="1 11">Forms a soluble 1:1 complex with AFM; this prevents oligomerization and is required for prolonged biological activity (PubMed:26902720). The complex with AFM may represent the physiological form in body fluids (PubMed:26902720). Interacts with PORCN. Interacts with RSPO1, RSPO2 and RSPO3 (By similarity). Interacts with WLS (By similarity).</text>
</comment>
<comment type="subcellular location">
    <subcellularLocation>
        <location evidence="13">Secreted</location>
        <location evidence="13">Extracellular space</location>
        <location evidence="13">Extracellular matrix</location>
    </subcellularLocation>
    <subcellularLocation>
        <location evidence="11">Secreted</location>
    </subcellularLocation>
</comment>
<comment type="PTM">
    <text evidence="3 4 14">Palmitoleoylation is required for efficient binding to frizzled receptors. Palmitoleoylation is necessary for proper trafficking to cell surface (Probable). Depalmitoleoylated by NOTUM, leading to inhibit Wnt signaling pathway (By similarity).</text>
</comment>
<comment type="polymorphism">
    <text evidence="8">Genetic variations in WNT1 define the bone mineral density quantitative trait locus 16 (BMND16) [MIM:615221]. Variance in bone mineral density influences bone mass, contributes to size determination in the general population, and is a susceptibility factor for osteoporotic fractures.</text>
</comment>
<comment type="disease" evidence="8 10">
    <disease id="DI-02659">
        <name>Osteoporosis</name>
        <acronym>OSTEOP</acronym>
        <description>A systemic skeletal disorder characterized by decreased bone mass and deterioration of bone microarchitecture without alteration in the composition of bone. The result is fragile bones and an increased risk of fractures, even after minimal trauma. Osteoporosis is a chronic condition of multifactorial etiology and is usually clinically silent until a fracture occurs.</description>
        <dbReference type="MIM" id="166710"/>
    </disease>
    <text>Disease susceptibility is associated with variants affecting the gene represented in this entry.</text>
</comment>
<comment type="disease" evidence="7 8 9 10 12">
    <disease id="DI-03754">
        <name>Osteogenesis imperfecta 15</name>
        <acronym>OI15</acronym>
        <description>An autosomal recessive form of osteogenesis imperfecta, a disorder of bone formation characterized by low bone mass, bone fragility and susceptibility to fractures after minimal trauma. Disease severity ranges from very mild forms without fractures to intrauterine fractures and perinatal lethality. Extraskeletal manifestations, which affect a variable number of patients, are dentinogenesis imperfecta, hearing loss, and blue sclerae. OI15 is characterized by early-onset recurrent fractures, bone deformity, significant reduction of bone density, short stature, and, in some patients, blue sclerae. Tooth development and hearing are normal. Learning and developmental delays and brain anomalies have been observed in some patients.</description>
        <dbReference type="MIM" id="615220"/>
    </disease>
    <text>The disease is caused by variants affecting the gene represented in this entry.</text>
</comment>
<comment type="similarity">
    <text evidence="13">Belongs to the Wnt family.</text>
</comment>
<comment type="caution">
    <text evidence="6">A palmitoylation site was proposed at Cys-93, but it was later shown that this cysteine is engaged in a disulfide bond.</text>
</comment>
<dbReference type="EMBL" id="X03072">
    <property type="protein sequence ID" value="CAA26874.1"/>
    <property type="molecule type" value="Genomic_DNA"/>
</dbReference>
<dbReference type="EMBL" id="BT019429">
    <property type="protein sequence ID" value="AAV38236.1"/>
    <property type="molecule type" value="mRNA"/>
</dbReference>
<dbReference type="EMBL" id="CH471111">
    <property type="protein sequence ID" value="EAW58030.1"/>
    <property type="molecule type" value="Genomic_DNA"/>
</dbReference>
<dbReference type="EMBL" id="BC074798">
    <property type="protein sequence ID" value="AAH74798.1"/>
    <property type="molecule type" value="mRNA"/>
</dbReference>
<dbReference type="EMBL" id="BC074799">
    <property type="protein sequence ID" value="AAH74799.1"/>
    <property type="molecule type" value="mRNA"/>
</dbReference>
<dbReference type="CCDS" id="CCDS8776.1"/>
<dbReference type="PIR" id="A24674">
    <property type="entry name" value="TVHUT1"/>
</dbReference>
<dbReference type="RefSeq" id="NP_005421.1">
    <property type="nucleotide sequence ID" value="NM_005430.4"/>
</dbReference>
<dbReference type="SMR" id="P04628"/>
<dbReference type="BioGRID" id="113308">
    <property type="interactions" value="69"/>
</dbReference>
<dbReference type="CORUM" id="P04628"/>
<dbReference type="FunCoup" id="P04628">
    <property type="interactions" value="648"/>
</dbReference>
<dbReference type="IntAct" id="P04628">
    <property type="interactions" value="3"/>
</dbReference>
<dbReference type="STRING" id="9606.ENSP00000293549"/>
<dbReference type="BindingDB" id="P04628"/>
<dbReference type="GlyCosmos" id="P04628">
    <property type="glycosylation" value="4 sites, No reported glycans"/>
</dbReference>
<dbReference type="GlyGen" id="P04628">
    <property type="glycosylation" value="4 sites"/>
</dbReference>
<dbReference type="iPTMnet" id="P04628"/>
<dbReference type="PhosphoSitePlus" id="P04628"/>
<dbReference type="SwissPalm" id="P04628"/>
<dbReference type="BioMuta" id="WNT1"/>
<dbReference type="DMDM" id="139743"/>
<dbReference type="jPOST" id="P04628"/>
<dbReference type="MassIVE" id="P04628"/>
<dbReference type="PaxDb" id="9606-ENSP00000293549"/>
<dbReference type="PeptideAtlas" id="P04628"/>
<dbReference type="ProteomicsDB" id="51722"/>
<dbReference type="Antibodypedia" id="13738">
    <property type="antibodies" value="531 antibodies from 42 providers"/>
</dbReference>
<dbReference type="DNASU" id="7471"/>
<dbReference type="Ensembl" id="ENST00000293549.4">
    <property type="protein sequence ID" value="ENSP00000293549.3"/>
    <property type="gene ID" value="ENSG00000125084.13"/>
</dbReference>
<dbReference type="GeneID" id="7471"/>
<dbReference type="KEGG" id="hsa:7471"/>
<dbReference type="MANE-Select" id="ENST00000293549.4">
    <property type="protein sequence ID" value="ENSP00000293549.3"/>
    <property type="RefSeq nucleotide sequence ID" value="NM_005430.4"/>
    <property type="RefSeq protein sequence ID" value="NP_005421.1"/>
</dbReference>
<dbReference type="UCSC" id="uc001rsu.4">
    <property type="organism name" value="human"/>
</dbReference>
<dbReference type="AGR" id="HGNC:12774"/>
<dbReference type="CTD" id="7471"/>
<dbReference type="DisGeNET" id="7471"/>
<dbReference type="GeneCards" id="WNT1"/>
<dbReference type="HGNC" id="HGNC:12774">
    <property type="gene designation" value="WNT1"/>
</dbReference>
<dbReference type="HPA" id="ENSG00000125084">
    <property type="expression patterns" value="Tissue enhanced (brain)"/>
</dbReference>
<dbReference type="MalaCards" id="WNT1"/>
<dbReference type="MIM" id="164820">
    <property type="type" value="gene"/>
</dbReference>
<dbReference type="MIM" id="166710">
    <property type="type" value="phenotype"/>
</dbReference>
<dbReference type="MIM" id="615220">
    <property type="type" value="phenotype"/>
</dbReference>
<dbReference type="MIM" id="615221">
    <property type="type" value="phenotype"/>
</dbReference>
<dbReference type="neXtProt" id="NX_P04628"/>
<dbReference type="OpenTargets" id="ENSG00000125084"/>
<dbReference type="Orphanet" id="85193">
    <property type="disease" value="Idiopathic juvenile osteoporosis"/>
</dbReference>
<dbReference type="Orphanet" id="216812">
    <property type="disease" value="Osteogenesis imperfecta type 3"/>
</dbReference>
<dbReference type="Orphanet" id="216820">
    <property type="disease" value="Osteogenesis imperfecta type 4"/>
</dbReference>
<dbReference type="PharmGKB" id="PA37376"/>
<dbReference type="VEuPathDB" id="HostDB:ENSG00000125084"/>
<dbReference type="eggNOG" id="KOG3913">
    <property type="taxonomic scope" value="Eukaryota"/>
</dbReference>
<dbReference type="GeneTree" id="ENSGT00940000160329"/>
<dbReference type="InParanoid" id="P04628"/>
<dbReference type="OMA" id="NDHMPDI"/>
<dbReference type="OrthoDB" id="5945655at2759"/>
<dbReference type="PAN-GO" id="P04628">
    <property type="GO annotations" value="6 GO annotations based on evolutionary models"/>
</dbReference>
<dbReference type="PhylomeDB" id="P04628"/>
<dbReference type="TreeFam" id="TF105310"/>
<dbReference type="PathwayCommons" id="P04628"/>
<dbReference type="Reactome" id="R-HSA-201681">
    <property type="pathway name" value="TCF dependent signaling in response to WNT"/>
</dbReference>
<dbReference type="Reactome" id="R-HSA-3238698">
    <property type="pathway name" value="WNT ligand biogenesis and trafficking"/>
</dbReference>
<dbReference type="Reactome" id="R-HSA-373080">
    <property type="pathway name" value="Class B/2 (Secretin family receptors)"/>
</dbReference>
<dbReference type="Reactome" id="R-HSA-381340">
    <property type="pathway name" value="Transcriptional regulation of white adipocyte differentiation"/>
</dbReference>
<dbReference type="Reactome" id="R-HSA-4086400">
    <property type="pathway name" value="PCP/CE pathway"/>
</dbReference>
<dbReference type="Reactome" id="R-HSA-4641262">
    <property type="pathway name" value="Disassembly of the destruction complex and recruitment of AXIN to the membrane"/>
</dbReference>
<dbReference type="SignaLink" id="P04628"/>
<dbReference type="SIGNOR" id="P04628"/>
<dbReference type="BioGRID-ORCS" id="7471">
    <property type="hits" value="26 hits in 1144 CRISPR screens"/>
</dbReference>
<dbReference type="GeneWiki" id="WNT1"/>
<dbReference type="GenomeRNAi" id="7471"/>
<dbReference type="Pharos" id="P04628">
    <property type="development level" value="Tbio"/>
</dbReference>
<dbReference type="PRO" id="PR:P04628"/>
<dbReference type="Proteomes" id="UP000005640">
    <property type="component" value="Chromosome 12"/>
</dbReference>
<dbReference type="RNAct" id="P04628">
    <property type="molecule type" value="protein"/>
</dbReference>
<dbReference type="Bgee" id="ENSG00000125084">
    <property type="expression patterns" value="Expressed in granulocyte and 58 other cell types or tissues"/>
</dbReference>
<dbReference type="ExpressionAtlas" id="P04628">
    <property type="expression patterns" value="baseline and differential"/>
</dbReference>
<dbReference type="GO" id="GO:0009986">
    <property type="term" value="C:cell surface"/>
    <property type="evidence" value="ECO:0007669"/>
    <property type="project" value="Ensembl"/>
</dbReference>
<dbReference type="GO" id="GO:0005737">
    <property type="term" value="C:cytoplasm"/>
    <property type="evidence" value="ECO:0000314"/>
    <property type="project" value="UniProtKB"/>
</dbReference>
<dbReference type="GO" id="GO:0030666">
    <property type="term" value="C:endocytic vesicle membrane"/>
    <property type="evidence" value="ECO:0000304"/>
    <property type="project" value="Reactome"/>
</dbReference>
<dbReference type="GO" id="GO:0005788">
    <property type="term" value="C:endoplasmic reticulum lumen"/>
    <property type="evidence" value="ECO:0000304"/>
    <property type="project" value="Reactome"/>
</dbReference>
<dbReference type="GO" id="GO:0070062">
    <property type="term" value="C:extracellular exosome"/>
    <property type="evidence" value="ECO:0000304"/>
    <property type="project" value="Reactome"/>
</dbReference>
<dbReference type="GO" id="GO:0005576">
    <property type="term" value="C:extracellular region"/>
    <property type="evidence" value="ECO:0000304"/>
    <property type="project" value="Reactome"/>
</dbReference>
<dbReference type="GO" id="GO:0005615">
    <property type="term" value="C:extracellular space"/>
    <property type="evidence" value="ECO:0000318"/>
    <property type="project" value="GO_Central"/>
</dbReference>
<dbReference type="GO" id="GO:0005796">
    <property type="term" value="C:Golgi lumen"/>
    <property type="evidence" value="ECO:0000304"/>
    <property type="project" value="Reactome"/>
</dbReference>
<dbReference type="GO" id="GO:0005886">
    <property type="term" value="C:plasma membrane"/>
    <property type="evidence" value="ECO:0000304"/>
    <property type="project" value="Reactome"/>
</dbReference>
<dbReference type="GO" id="GO:0005125">
    <property type="term" value="F:cytokine activity"/>
    <property type="evidence" value="ECO:0000314"/>
    <property type="project" value="UniProtKB"/>
</dbReference>
<dbReference type="GO" id="GO:0005109">
    <property type="term" value="F:frizzled binding"/>
    <property type="evidence" value="ECO:0000318"/>
    <property type="project" value="GO_Central"/>
</dbReference>
<dbReference type="GO" id="GO:0016015">
    <property type="term" value="F:morphogen activity"/>
    <property type="evidence" value="ECO:0000304"/>
    <property type="project" value="ParkinsonsUK-UCL"/>
</dbReference>
<dbReference type="GO" id="GO:0019904">
    <property type="term" value="F:protein domain specific binding"/>
    <property type="evidence" value="ECO:0007669"/>
    <property type="project" value="Ensembl"/>
</dbReference>
<dbReference type="GO" id="GO:0048018">
    <property type="term" value="F:receptor ligand activity"/>
    <property type="evidence" value="ECO:0000314"/>
    <property type="project" value="WormBase"/>
</dbReference>
<dbReference type="GO" id="GO:0031100">
    <property type="term" value="P:animal organ regeneration"/>
    <property type="evidence" value="ECO:0007669"/>
    <property type="project" value="Ensembl"/>
</dbReference>
<dbReference type="GO" id="GO:0036520">
    <property type="term" value="P:astrocyte-dopaminergic neuron signaling"/>
    <property type="evidence" value="ECO:0007669"/>
    <property type="project" value="Ensembl"/>
</dbReference>
<dbReference type="GO" id="GO:0060348">
    <property type="term" value="P:bone development"/>
    <property type="evidence" value="ECO:0000315"/>
    <property type="project" value="UniProtKB"/>
</dbReference>
<dbReference type="GO" id="GO:0001658">
    <property type="term" value="P:branching involved in ureteric bud morphogenesis"/>
    <property type="evidence" value="ECO:0007669"/>
    <property type="project" value="Ensembl"/>
</dbReference>
<dbReference type="GO" id="GO:0060070">
    <property type="term" value="P:canonical Wnt signaling pathway"/>
    <property type="evidence" value="ECO:0000314"/>
    <property type="project" value="BHF-UCL"/>
</dbReference>
<dbReference type="GO" id="GO:0045165">
    <property type="term" value="P:cell fate commitment"/>
    <property type="evidence" value="ECO:0000318"/>
    <property type="project" value="GO_Central"/>
</dbReference>
<dbReference type="GO" id="GO:0033278">
    <property type="term" value="P:cell proliferation in midbrain"/>
    <property type="evidence" value="ECO:0007669"/>
    <property type="project" value="Ensembl"/>
</dbReference>
<dbReference type="GO" id="GO:0007267">
    <property type="term" value="P:cell-cell signaling"/>
    <property type="evidence" value="ECO:0000250"/>
    <property type="project" value="BHF-UCL"/>
</dbReference>
<dbReference type="GO" id="GO:0071375">
    <property type="term" value="P:cellular response to peptide hormone stimulus"/>
    <property type="evidence" value="ECO:0007669"/>
    <property type="project" value="Ensembl"/>
</dbReference>
<dbReference type="GO" id="GO:0021551">
    <property type="term" value="P:central nervous system morphogenesis"/>
    <property type="evidence" value="ECO:0000250"/>
    <property type="project" value="BHF-UCL"/>
</dbReference>
<dbReference type="GO" id="GO:0021588">
    <property type="term" value="P:cerebellum formation"/>
    <property type="evidence" value="ECO:0000250"/>
    <property type="project" value="BHF-UCL"/>
</dbReference>
<dbReference type="GO" id="GO:0021536">
    <property type="term" value="P:diencephalon development"/>
    <property type="evidence" value="ECO:0007669"/>
    <property type="project" value="Ensembl"/>
</dbReference>
<dbReference type="GO" id="GO:0000578">
    <property type="term" value="P:embryonic axis specification"/>
    <property type="evidence" value="ECO:0000250"/>
    <property type="project" value="BHF-UCL"/>
</dbReference>
<dbReference type="GO" id="GO:1990403">
    <property type="term" value="P:embryonic brain development"/>
    <property type="evidence" value="ECO:0007669"/>
    <property type="project" value="Ensembl"/>
</dbReference>
<dbReference type="GO" id="GO:0045444">
    <property type="term" value="P:fat cell differentiation"/>
    <property type="evidence" value="ECO:0007669"/>
    <property type="project" value="Ensembl"/>
</dbReference>
<dbReference type="GO" id="GO:0021797">
    <property type="term" value="P:forebrain anterior/posterior pattern specification"/>
    <property type="evidence" value="ECO:0007669"/>
    <property type="project" value="Ensembl"/>
</dbReference>
<dbReference type="GO" id="GO:0071425">
    <property type="term" value="P:hematopoietic stem cell proliferation"/>
    <property type="evidence" value="ECO:0007669"/>
    <property type="project" value="Ensembl"/>
</dbReference>
<dbReference type="GO" id="GO:0070365">
    <property type="term" value="P:hepatocyte differentiation"/>
    <property type="evidence" value="ECO:0007669"/>
    <property type="project" value="Ensembl"/>
</dbReference>
<dbReference type="GO" id="GO:0042472">
    <property type="term" value="P:inner ear morphogenesis"/>
    <property type="evidence" value="ECO:0007669"/>
    <property type="project" value="Ensembl"/>
</dbReference>
<dbReference type="GO" id="GO:0030901">
    <property type="term" value="P:midbrain development"/>
    <property type="evidence" value="ECO:0000250"/>
    <property type="project" value="BHF-UCL"/>
</dbReference>
<dbReference type="GO" id="GO:1904948">
    <property type="term" value="P:midbrain dopaminergic neuron differentiation"/>
    <property type="evidence" value="ECO:0000304"/>
    <property type="project" value="ParkinsonsUK-UCL"/>
</dbReference>
<dbReference type="GO" id="GO:0022004">
    <property type="term" value="P:midbrain-hindbrain boundary maturation during brain development"/>
    <property type="evidence" value="ECO:0007669"/>
    <property type="project" value="Ensembl"/>
</dbReference>
<dbReference type="GO" id="GO:0007520">
    <property type="term" value="P:myoblast fusion"/>
    <property type="evidence" value="ECO:0007669"/>
    <property type="project" value="Ensembl"/>
</dbReference>
<dbReference type="GO" id="GO:0043066">
    <property type="term" value="P:negative regulation of apoptotic process"/>
    <property type="evidence" value="ECO:0000315"/>
    <property type="project" value="BHF-UCL"/>
</dbReference>
<dbReference type="GO" id="GO:0030514">
    <property type="term" value="P:negative regulation of BMP signaling pathway"/>
    <property type="evidence" value="ECO:0000315"/>
    <property type="project" value="AgBase"/>
</dbReference>
<dbReference type="GO" id="GO:0022408">
    <property type="term" value="P:negative regulation of cell-cell adhesion"/>
    <property type="evidence" value="ECO:0000315"/>
    <property type="project" value="BHF-UCL"/>
</dbReference>
<dbReference type="GO" id="GO:0010812">
    <property type="term" value="P:negative regulation of cell-substrate adhesion"/>
    <property type="evidence" value="ECO:0000314"/>
    <property type="project" value="BHF-UCL"/>
</dbReference>
<dbReference type="GO" id="GO:2000773">
    <property type="term" value="P:negative regulation of cellular senescence"/>
    <property type="evidence" value="ECO:0000314"/>
    <property type="project" value="BHF-UCL"/>
</dbReference>
<dbReference type="GO" id="GO:0045599">
    <property type="term" value="P:negative regulation of fat cell differentiation"/>
    <property type="evidence" value="ECO:0000250"/>
    <property type="project" value="BHF-UCL"/>
</dbReference>
<dbReference type="GO" id="GO:1903377">
    <property type="term" value="P:negative regulation of oxidative stress-induced neuron intrinsic apoptotic signaling pathway"/>
    <property type="evidence" value="ECO:0007669"/>
    <property type="project" value="Ensembl"/>
</dbReference>
<dbReference type="GO" id="GO:0030512">
    <property type="term" value="P:negative regulation of transforming growth factor beta receptor signaling pathway"/>
    <property type="evidence" value="ECO:0007669"/>
    <property type="project" value="Ensembl"/>
</dbReference>
<dbReference type="GO" id="GO:2000059">
    <property type="term" value="P:negative regulation of ubiquitin-dependent protein catabolic process"/>
    <property type="evidence" value="ECO:0007669"/>
    <property type="project" value="Ensembl"/>
</dbReference>
<dbReference type="GO" id="GO:0030182">
    <property type="term" value="P:neuron differentiation"/>
    <property type="evidence" value="ECO:0000318"/>
    <property type="project" value="GO_Central"/>
</dbReference>
<dbReference type="GO" id="GO:0048664">
    <property type="term" value="P:neuron fate determination"/>
    <property type="evidence" value="ECO:0007669"/>
    <property type="project" value="Ensembl"/>
</dbReference>
<dbReference type="GO" id="GO:0008284">
    <property type="term" value="P:positive regulation of cell population proliferation"/>
    <property type="evidence" value="ECO:0000314"/>
    <property type="project" value="BHF-UCL"/>
</dbReference>
<dbReference type="GO" id="GO:0061184">
    <property type="term" value="P:positive regulation of dermatome development"/>
    <property type="evidence" value="ECO:0000314"/>
    <property type="project" value="BHF-UCL"/>
</dbReference>
<dbReference type="GO" id="GO:0045893">
    <property type="term" value="P:positive regulation of DNA-templated transcription"/>
    <property type="evidence" value="ECO:0000314"/>
    <property type="project" value="BHF-UCL"/>
</dbReference>
<dbReference type="GO" id="GO:0048146">
    <property type="term" value="P:positive regulation of fibroblast proliferation"/>
    <property type="evidence" value="ECO:0000315"/>
    <property type="project" value="BHF-UCL"/>
</dbReference>
<dbReference type="GO" id="GO:1902035">
    <property type="term" value="P:positive regulation of hematopoietic stem cell proliferation"/>
    <property type="evidence" value="ECO:0007669"/>
    <property type="project" value="Ensembl"/>
</dbReference>
<dbReference type="GO" id="GO:0043568">
    <property type="term" value="P:positive regulation of insulin-like growth factor receptor signaling pathway"/>
    <property type="evidence" value="ECO:0000314"/>
    <property type="project" value="BHF-UCL"/>
</dbReference>
<dbReference type="GO" id="GO:0010592">
    <property type="term" value="P:positive regulation of lamellipodium assembly"/>
    <property type="evidence" value="ECO:0000315"/>
    <property type="project" value="BHF-UCL"/>
</dbReference>
<dbReference type="GO" id="GO:0045747">
    <property type="term" value="P:positive regulation of Notch signaling pathway"/>
    <property type="evidence" value="ECO:0000314"/>
    <property type="project" value="BHF-UCL"/>
</dbReference>
<dbReference type="GO" id="GO:0045944">
    <property type="term" value="P:positive regulation of transcription by RNA polymerase II"/>
    <property type="evidence" value="ECO:0007669"/>
    <property type="project" value="Ensembl"/>
</dbReference>
<dbReference type="GO" id="GO:0009611">
    <property type="term" value="P:response to wounding"/>
    <property type="evidence" value="ECO:0000270"/>
    <property type="project" value="UniProtKB"/>
</dbReference>
<dbReference type="GO" id="GO:0042770">
    <property type="term" value="P:signal transduction in response to DNA damage"/>
    <property type="evidence" value="ECO:0000314"/>
    <property type="project" value="BHF-UCL"/>
</dbReference>
<dbReference type="GO" id="GO:0060061">
    <property type="term" value="P:Spemann organizer formation"/>
    <property type="evidence" value="ECO:0000250"/>
    <property type="project" value="BHF-UCL"/>
</dbReference>
<dbReference type="GO" id="GO:0021527">
    <property type="term" value="P:spinal cord association neuron differentiation"/>
    <property type="evidence" value="ECO:0007669"/>
    <property type="project" value="Ensembl"/>
</dbReference>
<dbReference type="GO" id="GO:0033077">
    <property type="term" value="P:T cell differentiation in thymus"/>
    <property type="evidence" value="ECO:0007669"/>
    <property type="project" value="Ensembl"/>
</dbReference>
<dbReference type="GO" id="GO:0016055">
    <property type="term" value="P:Wnt signaling pathway"/>
    <property type="evidence" value="ECO:0000250"/>
    <property type="project" value="BHF-UCL"/>
</dbReference>
<dbReference type="CDD" id="cd19333">
    <property type="entry name" value="Wnt_Wnt1"/>
    <property type="match status" value="1"/>
</dbReference>
<dbReference type="FunFam" id="3.30.2460.20:FF:000001">
    <property type="entry name" value="Wnt homolog"/>
    <property type="match status" value="1"/>
</dbReference>
<dbReference type="Gene3D" id="3.30.2460.20">
    <property type="match status" value="1"/>
</dbReference>
<dbReference type="InterPro" id="IPR005817">
    <property type="entry name" value="Wnt"/>
</dbReference>
<dbReference type="InterPro" id="IPR009139">
    <property type="entry name" value="Wnt1"/>
</dbReference>
<dbReference type="InterPro" id="IPR043158">
    <property type="entry name" value="Wnt_C"/>
</dbReference>
<dbReference type="InterPro" id="IPR018161">
    <property type="entry name" value="Wnt_CS"/>
</dbReference>
<dbReference type="PANTHER" id="PTHR12027:SF91">
    <property type="entry name" value="PROTO-ONCOGENE WNT-1"/>
    <property type="match status" value="1"/>
</dbReference>
<dbReference type="PANTHER" id="PTHR12027">
    <property type="entry name" value="WNT RELATED"/>
    <property type="match status" value="1"/>
</dbReference>
<dbReference type="Pfam" id="PF00110">
    <property type="entry name" value="wnt"/>
    <property type="match status" value="1"/>
</dbReference>
<dbReference type="PRINTS" id="PR01841">
    <property type="entry name" value="WNT1PROTEIN"/>
</dbReference>
<dbReference type="PRINTS" id="PR01349">
    <property type="entry name" value="WNTPROTEIN"/>
</dbReference>
<dbReference type="SMART" id="SM00097">
    <property type="entry name" value="WNT1"/>
    <property type="match status" value="1"/>
</dbReference>
<dbReference type="PROSITE" id="PS00246">
    <property type="entry name" value="WNT1"/>
    <property type="match status" value="1"/>
</dbReference>
<proteinExistence type="evidence at protein level"/>
<evidence type="ECO:0000250" key="1">
    <source>
        <dbReference type="UniProtKB" id="P04426"/>
    </source>
</evidence>
<evidence type="ECO:0000250" key="2">
    <source>
        <dbReference type="UniProtKB" id="P28026"/>
    </source>
</evidence>
<evidence type="ECO:0000250" key="3">
    <source>
        <dbReference type="UniProtKB" id="P56704"/>
    </source>
</evidence>
<evidence type="ECO:0000250" key="4">
    <source>
        <dbReference type="UniProtKB" id="Q91029"/>
    </source>
</evidence>
<evidence type="ECO:0000255" key="5"/>
<evidence type="ECO:0000269" key="6">
    <source>
    </source>
</evidence>
<evidence type="ECO:0000269" key="7">
    <source>
    </source>
</evidence>
<evidence type="ECO:0000269" key="8">
    <source>
    </source>
</evidence>
<evidence type="ECO:0000269" key="9">
    <source>
    </source>
</evidence>
<evidence type="ECO:0000269" key="10">
    <source>
    </source>
</evidence>
<evidence type="ECO:0000269" key="11">
    <source>
    </source>
</evidence>
<evidence type="ECO:0000269" key="12">
    <source>
    </source>
</evidence>
<evidence type="ECO:0000305" key="13"/>
<evidence type="ECO:0000305" key="14">
    <source>
    </source>
</evidence>
<name>WNT1_HUMAN</name>
<keyword id="KW-0217">Developmental protein</keyword>
<keyword id="KW-0225">Disease variant</keyword>
<keyword id="KW-1015">Disulfide bond</keyword>
<keyword id="KW-0272">Extracellular matrix</keyword>
<keyword id="KW-0325">Glycoprotein</keyword>
<keyword id="KW-0449">Lipoprotein</keyword>
<keyword id="KW-1065">Osteogenesis imperfecta</keyword>
<keyword id="KW-1285">Osteoporosis</keyword>
<keyword id="KW-1267">Proteomics identification</keyword>
<keyword id="KW-0656">Proto-oncogene</keyword>
<keyword id="KW-1185">Reference proteome</keyword>
<keyword id="KW-0964">Secreted</keyword>
<keyword id="KW-0732">Signal</keyword>
<keyword id="KW-0879">Wnt signaling pathway</keyword>
<protein>
    <recommendedName>
        <fullName>Proto-oncogene Wnt-1</fullName>
    </recommendedName>
    <alternativeName>
        <fullName>Proto-oncogene Int-1 homolog</fullName>
    </alternativeName>
</protein>
<accession>P04628</accession>
<accession>Q5U0N2</accession>